<dbReference type="EC" id="3.2.2.9" evidence="1"/>
<dbReference type="EMBL" id="CP001215">
    <property type="protein sequence ID" value="ACP15442.1"/>
    <property type="molecule type" value="Genomic_DNA"/>
</dbReference>
<dbReference type="RefSeq" id="WP_001217039.1">
    <property type="nucleotide sequence ID" value="NC_012581.1"/>
</dbReference>
<dbReference type="SMR" id="C3L5Y0"/>
<dbReference type="GeneID" id="75087509"/>
<dbReference type="KEGG" id="bah:BAMEG_4639"/>
<dbReference type="HOGENOM" id="CLU_031248_2_2_9"/>
<dbReference type="UniPathway" id="UPA00904">
    <property type="reaction ID" value="UER00871"/>
</dbReference>
<dbReference type="GO" id="GO:0005829">
    <property type="term" value="C:cytosol"/>
    <property type="evidence" value="ECO:0007669"/>
    <property type="project" value="TreeGrafter"/>
</dbReference>
<dbReference type="GO" id="GO:0008782">
    <property type="term" value="F:adenosylhomocysteine nucleosidase activity"/>
    <property type="evidence" value="ECO:0007669"/>
    <property type="project" value="UniProtKB-UniRule"/>
</dbReference>
<dbReference type="GO" id="GO:0008930">
    <property type="term" value="F:methylthioadenosine nucleosidase activity"/>
    <property type="evidence" value="ECO:0007669"/>
    <property type="project" value="UniProtKB-UniRule"/>
</dbReference>
<dbReference type="GO" id="GO:0019509">
    <property type="term" value="P:L-methionine salvage from methylthioadenosine"/>
    <property type="evidence" value="ECO:0007669"/>
    <property type="project" value="UniProtKB-UniRule"/>
</dbReference>
<dbReference type="GO" id="GO:0019284">
    <property type="term" value="P:L-methionine salvage from S-adenosylmethionine"/>
    <property type="evidence" value="ECO:0007669"/>
    <property type="project" value="TreeGrafter"/>
</dbReference>
<dbReference type="GO" id="GO:0009164">
    <property type="term" value="P:nucleoside catabolic process"/>
    <property type="evidence" value="ECO:0007669"/>
    <property type="project" value="InterPro"/>
</dbReference>
<dbReference type="CDD" id="cd09008">
    <property type="entry name" value="MTAN"/>
    <property type="match status" value="1"/>
</dbReference>
<dbReference type="FunFam" id="3.40.50.1580:FF:000001">
    <property type="entry name" value="MTA/SAH nucleosidase family protein"/>
    <property type="match status" value="1"/>
</dbReference>
<dbReference type="Gene3D" id="3.40.50.1580">
    <property type="entry name" value="Nucleoside phosphorylase domain"/>
    <property type="match status" value="1"/>
</dbReference>
<dbReference type="HAMAP" id="MF_01684">
    <property type="entry name" value="Salvage_MtnN"/>
    <property type="match status" value="1"/>
</dbReference>
<dbReference type="InterPro" id="IPR010049">
    <property type="entry name" value="MTA_SAH_Nsdase"/>
</dbReference>
<dbReference type="InterPro" id="IPR000845">
    <property type="entry name" value="Nucleoside_phosphorylase_d"/>
</dbReference>
<dbReference type="InterPro" id="IPR035994">
    <property type="entry name" value="Nucleoside_phosphorylase_sf"/>
</dbReference>
<dbReference type="NCBIfam" id="TIGR01704">
    <property type="entry name" value="MTA_SAH-Nsdase"/>
    <property type="match status" value="1"/>
</dbReference>
<dbReference type="NCBIfam" id="NF004079">
    <property type="entry name" value="PRK05584.1"/>
    <property type="match status" value="1"/>
</dbReference>
<dbReference type="PANTHER" id="PTHR46832">
    <property type="entry name" value="5'-METHYLTHIOADENOSINE/S-ADENOSYLHOMOCYSTEINE NUCLEOSIDASE"/>
    <property type="match status" value="1"/>
</dbReference>
<dbReference type="PANTHER" id="PTHR46832:SF1">
    <property type="entry name" value="5'-METHYLTHIOADENOSINE_S-ADENOSYLHOMOCYSTEINE NUCLEOSIDASE"/>
    <property type="match status" value="1"/>
</dbReference>
<dbReference type="Pfam" id="PF01048">
    <property type="entry name" value="PNP_UDP_1"/>
    <property type="match status" value="1"/>
</dbReference>
<dbReference type="SUPFAM" id="SSF53167">
    <property type="entry name" value="Purine and uridine phosphorylases"/>
    <property type="match status" value="1"/>
</dbReference>
<evidence type="ECO:0000255" key="1">
    <source>
        <dbReference type="HAMAP-Rule" id="MF_01684"/>
    </source>
</evidence>
<feature type="chain" id="PRO_1000187408" description="5'-methylthioadenosine/S-adenosylhomocysteine nucleosidase">
    <location>
        <begin position="1"/>
        <end position="231"/>
    </location>
</feature>
<feature type="active site" description="Proton acceptor" evidence="1">
    <location>
        <position position="12"/>
    </location>
</feature>
<feature type="active site" description="Proton donor" evidence="1">
    <location>
        <position position="198"/>
    </location>
</feature>
<feature type="binding site" evidence="1">
    <location>
        <position position="78"/>
    </location>
    <ligand>
        <name>substrate</name>
    </ligand>
</feature>
<feature type="binding site" evidence="1">
    <location>
        <position position="153"/>
    </location>
    <ligand>
        <name>substrate</name>
    </ligand>
</feature>
<feature type="binding site" evidence="1">
    <location>
        <begin position="174"/>
        <end position="175"/>
    </location>
    <ligand>
        <name>substrate</name>
    </ligand>
</feature>
<proteinExistence type="inferred from homology"/>
<keyword id="KW-0028">Amino-acid biosynthesis</keyword>
<keyword id="KW-0378">Hydrolase</keyword>
<keyword id="KW-0486">Methionine biosynthesis</keyword>
<comment type="function">
    <text evidence="1">Catalyzes the irreversible cleavage of the glycosidic bond in both 5'-methylthioadenosine (MTA) and S-adenosylhomocysteine (SAH/AdoHcy) to adenine and the corresponding thioribose, 5'-methylthioribose and S-ribosylhomocysteine, respectively. Also cleaves 5'-deoxyadenosine, a toxic by-product of radical S-adenosylmethionine (SAM) enzymes, into 5-deoxyribose and adenine.</text>
</comment>
<comment type="catalytic activity">
    <reaction evidence="1">
        <text>S-adenosyl-L-homocysteine + H2O = S-(5-deoxy-D-ribos-5-yl)-L-homocysteine + adenine</text>
        <dbReference type="Rhea" id="RHEA:17805"/>
        <dbReference type="ChEBI" id="CHEBI:15377"/>
        <dbReference type="ChEBI" id="CHEBI:16708"/>
        <dbReference type="ChEBI" id="CHEBI:57856"/>
        <dbReference type="ChEBI" id="CHEBI:58195"/>
        <dbReference type="EC" id="3.2.2.9"/>
    </reaction>
</comment>
<comment type="catalytic activity">
    <reaction evidence="1">
        <text>S-methyl-5'-thioadenosine + H2O = 5-(methylsulfanyl)-D-ribose + adenine</text>
        <dbReference type="Rhea" id="RHEA:13617"/>
        <dbReference type="ChEBI" id="CHEBI:15377"/>
        <dbReference type="ChEBI" id="CHEBI:16708"/>
        <dbReference type="ChEBI" id="CHEBI:17509"/>
        <dbReference type="ChEBI" id="CHEBI:78440"/>
        <dbReference type="EC" id="3.2.2.9"/>
    </reaction>
</comment>
<comment type="catalytic activity">
    <reaction evidence="1">
        <text>5'-deoxyadenosine + H2O = 5-deoxy-D-ribose + adenine</text>
        <dbReference type="Rhea" id="RHEA:29859"/>
        <dbReference type="ChEBI" id="CHEBI:15377"/>
        <dbReference type="ChEBI" id="CHEBI:16708"/>
        <dbReference type="ChEBI" id="CHEBI:17319"/>
        <dbReference type="ChEBI" id="CHEBI:149540"/>
        <dbReference type="EC" id="3.2.2.9"/>
    </reaction>
    <physiologicalReaction direction="left-to-right" evidence="1">
        <dbReference type="Rhea" id="RHEA:29860"/>
    </physiologicalReaction>
</comment>
<comment type="pathway">
    <text evidence="1">Amino-acid biosynthesis; L-methionine biosynthesis via salvage pathway; S-methyl-5-thio-alpha-D-ribose 1-phosphate from S-methyl-5'-thioadenosine (hydrolase route): step 1/2.</text>
</comment>
<comment type="similarity">
    <text evidence="1">Belongs to the PNP/UDP phosphorylase family. MtnN subfamily.</text>
</comment>
<organism>
    <name type="scientific">Bacillus anthracis (strain CDC 684 / NRRL 3495)</name>
    <dbReference type="NCBI Taxonomy" id="568206"/>
    <lineage>
        <taxon>Bacteria</taxon>
        <taxon>Bacillati</taxon>
        <taxon>Bacillota</taxon>
        <taxon>Bacilli</taxon>
        <taxon>Bacillales</taxon>
        <taxon>Bacillaceae</taxon>
        <taxon>Bacillus</taxon>
        <taxon>Bacillus cereus group</taxon>
    </lineage>
</organism>
<protein>
    <recommendedName>
        <fullName evidence="1">5'-methylthioadenosine/S-adenosylhomocysteine nucleosidase</fullName>
        <shortName evidence="1">MTA/SAH nucleosidase</shortName>
        <shortName evidence="1">MTAN</shortName>
        <ecNumber evidence="1">3.2.2.9</ecNumber>
    </recommendedName>
    <alternativeName>
        <fullName evidence="1">5'-deoxyadenosine nucleosidase</fullName>
        <shortName evidence="1">DOA nucleosidase</shortName>
        <shortName evidence="1">dAdo nucleosidase</shortName>
    </alternativeName>
    <alternativeName>
        <fullName evidence="1">5'-methylthioadenosine nucleosidase</fullName>
        <shortName evidence="1">MTA nucleosidase</shortName>
    </alternativeName>
    <alternativeName>
        <fullName evidence="1">S-adenosylhomocysteine nucleosidase</fullName>
        <shortName evidence="1">AdoHcy nucleosidase</shortName>
        <shortName evidence="1">SAH nucleosidase</shortName>
        <shortName evidence="1">SRH nucleosidase</shortName>
    </alternativeName>
</protein>
<gene>
    <name evidence="1" type="primary">mtnN</name>
    <name type="ordered locus">BAMEG_4639</name>
</gene>
<reference key="1">
    <citation type="submission" date="2008-10" db="EMBL/GenBank/DDBJ databases">
        <title>Genome sequence of Bacillus anthracis str. CDC 684.</title>
        <authorList>
            <person name="Dodson R.J."/>
            <person name="Munk A.C."/>
            <person name="Brettin T."/>
            <person name="Bruce D."/>
            <person name="Detter C."/>
            <person name="Tapia R."/>
            <person name="Han C."/>
            <person name="Sutton G."/>
            <person name="Sims D."/>
        </authorList>
    </citation>
    <scope>NUCLEOTIDE SEQUENCE [LARGE SCALE GENOMIC DNA]</scope>
    <source>
        <strain>CDC 684 / NRRL 3495</strain>
    </source>
</reference>
<name>MTNN_BACAC</name>
<sequence length="231" mass="25255">MRIAVIGAMEEEVRILRDKLEQAETETVAGCEFTKGQLAGHEVILLKSGIGKVNAAMSTTILLERYKPEKVINTGSAGGFHHSLNVGDVVISTEVRHHDVDVTAFNYEYGQVPGMPPGFKADEALVALAEKCMQAEENIQVVKGMIATGDSFMSDPNRVAAIRDKFENLYAVEMEAAAVAQVCHQYEVPFVIIRALSDIAGKESNVSFDQFLDQAALHSTNFIVKVLEELK</sequence>
<accession>C3L5Y0</accession>